<evidence type="ECO:0000250" key="1">
    <source>
        <dbReference type="UniProtKB" id="P0A742"/>
    </source>
</evidence>
<evidence type="ECO:0000250" key="2">
    <source>
        <dbReference type="UniProtKB" id="P9WJN5"/>
    </source>
</evidence>
<evidence type="ECO:0000255" key="3">
    <source>
        <dbReference type="HAMAP-Rule" id="MF_00115"/>
    </source>
</evidence>
<evidence type="ECO:0000269" key="4">
    <source>
    </source>
</evidence>
<evidence type="ECO:0000305" key="5"/>
<keyword id="KW-1003">Cell membrane</keyword>
<keyword id="KW-0407">Ion channel</keyword>
<keyword id="KW-0406">Ion transport</keyword>
<keyword id="KW-0472">Membrane</keyword>
<keyword id="KW-1185">Reference proteome</keyword>
<keyword id="KW-0812">Transmembrane</keyword>
<keyword id="KW-1133">Transmembrane helix</keyword>
<keyword id="KW-0813">Transport</keyword>
<protein>
    <recommendedName>
        <fullName evidence="3">Large-conductance mechanosensitive channel</fullName>
    </recommendedName>
</protein>
<name>MSCL_BACSU</name>
<gene>
    <name evidence="3" type="primary">mscL</name>
    <name type="synonym">ywpC</name>
    <name type="ordered locus">BSU36360</name>
</gene>
<comment type="function">
    <text evidence="4">Channel that opens in response to stretch forces in the membrane lipid bilayer. Forms a nonselective ion channel with a conductance of about 4 nanosiemens. May participate in the regulation of osmotic pressure changes within the cell.</text>
</comment>
<comment type="subunit">
    <text evidence="1 3">Homopentamer.</text>
</comment>
<comment type="subcellular location">
    <subcellularLocation>
        <location evidence="3 4">Cell membrane</location>
        <topology evidence="1 3">Multi-pass membrane protein</topology>
    </subcellularLocation>
</comment>
<comment type="similarity">
    <text evidence="3 5">Belongs to the MscL family.</text>
</comment>
<reference key="1">
    <citation type="journal article" date="1997" name="Microbiology">
        <title>The Bacillus subtilis genome from gerBC (311 degrees) to licR (334 degrees).</title>
        <authorList>
            <person name="Presecan E."/>
            <person name="Moszer I."/>
            <person name="Boursier L."/>
            <person name="Cruz Ramos H."/>
            <person name="De La Fuente V."/>
            <person name="Hullo M.-F."/>
            <person name="Lelong C."/>
            <person name="Schleich S."/>
            <person name="Sekowska A."/>
            <person name="Song B.H."/>
            <person name="Villani G."/>
            <person name="Kunst F."/>
            <person name="Danchin A."/>
            <person name="Glaser P."/>
        </authorList>
    </citation>
    <scope>NUCLEOTIDE SEQUENCE [GENOMIC DNA]</scope>
    <source>
        <strain>168</strain>
    </source>
</reference>
<reference key="2">
    <citation type="journal article" date="1997" name="Nature">
        <title>The complete genome sequence of the Gram-positive bacterium Bacillus subtilis.</title>
        <authorList>
            <person name="Kunst F."/>
            <person name="Ogasawara N."/>
            <person name="Moszer I."/>
            <person name="Albertini A.M."/>
            <person name="Alloni G."/>
            <person name="Azevedo V."/>
            <person name="Bertero M.G."/>
            <person name="Bessieres P."/>
            <person name="Bolotin A."/>
            <person name="Borchert S."/>
            <person name="Borriss R."/>
            <person name="Boursier L."/>
            <person name="Brans A."/>
            <person name="Braun M."/>
            <person name="Brignell S.C."/>
            <person name="Bron S."/>
            <person name="Brouillet S."/>
            <person name="Bruschi C.V."/>
            <person name="Caldwell B."/>
            <person name="Capuano V."/>
            <person name="Carter N.M."/>
            <person name="Choi S.-K."/>
            <person name="Codani J.-J."/>
            <person name="Connerton I.F."/>
            <person name="Cummings N.J."/>
            <person name="Daniel R.A."/>
            <person name="Denizot F."/>
            <person name="Devine K.M."/>
            <person name="Duesterhoeft A."/>
            <person name="Ehrlich S.D."/>
            <person name="Emmerson P.T."/>
            <person name="Entian K.-D."/>
            <person name="Errington J."/>
            <person name="Fabret C."/>
            <person name="Ferrari E."/>
            <person name="Foulger D."/>
            <person name="Fritz C."/>
            <person name="Fujita M."/>
            <person name="Fujita Y."/>
            <person name="Fuma S."/>
            <person name="Galizzi A."/>
            <person name="Galleron N."/>
            <person name="Ghim S.-Y."/>
            <person name="Glaser P."/>
            <person name="Goffeau A."/>
            <person name="Golightly E.J."/>
            <person name="Grandi G."/>
            <person name="Guiseppi G."/>
            <person name="Guy B.J."/>
            <person name="Haga K."/>
            <person name="Haiech J."/>
            <person name="Harwood C.R."/>
            <person name="Henaut A."/>
            <person name="Hilbert H."/>
            <person name="Holsappel S."/>
            <person name="Hosono S."/>
            <person name="Hullo M.-F."/>
            <person name="Itaya M."/>
            <person name="Jones L.-M."/>
            <person name="Joris B."/>
            <person name="Karamata D."/>
            <person name="Kasahara Y."/>
            <person name="Klaerr-Blanchard M."/>
            <person name="Klein C."/>
            <person name="Kobayashi Y."/>
            <person name="Koetter P."/>
            <person name="Koningstein G."/>
            <person name="Krogh S."/>
            <person name="Kumano M."/>
            <person name="Kurita K."/>
            <person name="Lapidus A."/>
            <person name="Lardinois S."/>
            <person name="Lauber J."/>
            <person name="Lazarevic V."/>
            <person name="Lee S.-M."/>
            <person name="Levine A."/>
            <person name="Liu H."/>
            <person name="Masuda S."/>
            <person name="Mauel C."/>
            <person name="Medigue C."/>
            <person name="Medina N."/>
            <person name="Mellado R.P."/>
            <person name="Mizuno M."/>
            <person name="Moestl D."/>
            <person name="Nakai S."/>
            <person name="Noback M."/>
            <person name="Noone D."/>
            <person name="O'Reilly M."/>
            <person name="Ogawa K."/>
            <person name="Ogiwara A."/>
            <person name="Oudega B."/>
            <person name="Park S.-H."/>
            <person name="Parro V."/>
            <person name="Pohl T.M."/>
            <person name="Portetelle D."/>
            <person name="Porwollik S."/>
            <person name="Prescott A.M."/>
            <person name="Presecan E."/>
            <person name="Pujic P."/>
            <person name="Purnelle B."/>
            <person name="Rapoport G."/>
            <person name="Rey M."/>
            <person name="Reynolds S."/>
            <person name="Rieger M."/>
            <person name="Rivolta C."/>
            <person name="Rocha E."/>
            <person name="Roche B."/>
            <person name="Rose M."/>
            <person name="Sadaie Y."/>
            <person name="Sato T."/>
            <person name="Scanlan E."/>
            <person name="Schleich S."/>
            <person name="Schroeter R."/>
            <person name="Scoffone F."/>
            <person name="Sekiguchi J."/>
            <person name="Sekowska A."/>
            <person name="Seror S.J."/>
            <person name="Serror P."/>
            <person name="Shin B.-S."/>
            <person name="Soldo B."/>
            <person name="Sorokin A."/>
            <person name="Tacconi E."/>
            <person name="Takagi T."/>
            <person name="Takahashi H."/>
            <person name="Takemaru K."/>
            <person name="Takeuchi M."/>
            <person name="Tamakoshi A."/>
            <person name="Tanaka T."/>
            <person name="Terpstra P."/>
            <person name="Tognoni A."/>
            <person name="Tosato V."/>
            <person name="Uchiyama S."/>
            <person name="Vandenbol M."/>
            <person name="Vannier F."/>
            <person name="Vassarotti A."/>
            <person name="Viari A."/>
            <person name="Wambutt R."/>
            <person name="Wedler E."/>
            <person name="Wedler H."/>
            <person name="Weitzenegger T."/>
            <person name="Winters P."/>
            <person name="Wipat A."/>
            <person name="Yamamoto H."/>
            <person name="Yamane K."/>
            <person name="Yasumoto K."/>
            <person name="Yata K."/>
            <person name="Yoshida K."/>
            <person name="Yoshikawa H.-F."/>
            <person name="Zumstein E."/>
            <person name="Yoshikawa H."/>
            <person name="Danchin A."/>
        </authorList>
    </citation>
    <scope>NUCLEOTIDE SEQUENCE [LARGE SCALE GENOMIC DNA]</scope>
    <source>
        <strain>168</strain>
    </source>
</reference>
<reference key="3">
    <citation type="journal article" date="1998" name="Mol. Microbiol.">
        <title>Functional and structural conservation in the mechanosensitive channel mscL implicates elements crucial for mechanosensation.</title>
        <authorList>
            <person name="Moe P.C."/>
            <person name="Blount P."/>
            <person name="Kung C."/>
        </authorList>
    </citation>
    <scope>FUNCTION</scope>
    <scope>SUBCELLULAR LOCATION</scope>
</reference>
<proteinExistence type="inferred from homology"/>
<dbReference type="EMBL" id="Z83337">
    <property type="protein sequence ID" value="CAB05944.1"/>
    <property type="molecule type" value="Genomic_DNA"/>
</dbReference>
<dbReference type="EMBL" id="AL009126">
    <property type="protein sequence ID" value="CAB15653.1"/>
    <property type="molecule type" value="Genomic_DNA"/>
</dbReference>
<dbReference type="PIR" id="E70065">
    <property type="entry name" value="E70065"/>
</dbReference>
<dbReference type="RefSeq" id="NP_391517.1">
    <property type="nucleotide sequence ID" value="NC_000964.3"/>
</dbReference>
<dbReference type="RefSeq" id="WP_003242893.1">
    <property type="nucleotide sequence ID" value="NZ_OZ025638.1"/>
</dbReference>
<dbReference type="FunCoup" id="P94585">
    <property type="interactions" value="472"/>
</dbReference>
<dbReference type="STRING" id="224308.BSU36360"/>
<dbReference type="TCDB" id="1.A.22.1.3">
    <property type="family name" value="the large conductance mechanosensitive ion channel (mscl) family"/>
</dbReference>
<dbReference type="PaxDb" id="224308-BSU36360"/>
<dbReference type="EnsemblBacteria" id="CAB15653">
    <property type="protein sequence ID" value="CAB15653"/>
    <property type="gene ID" value="BSU_36360"/>
</dbReference>
<dbReference type="GeneID" id="936909"/>
<dbReference type="KEGG" id="bsu:BSU36360"/>
<dbReference type="PATRIC" id="fig|224308.43.peg.3811"/>
<dbReference type="eggNOG" id="COG1970">
    <property type="taxonomic scope" value="Bacteria"/>
</dbReference>
<dbReference type="InParanoid" id="P94585"/>
<dbReference type="OrthoDB" id="9810350at2"/>
<dbReference type="PhylomeDB" id="P94585"/>
<dbReference type="BioCyc" id="BSUB:BSU36360-MONOMER"/>
<dbReference type="Proteomes" id="UP000001570">
    <property type="component" value="Chromosome"/>
</dbReference>
<dbReference type="GO" id="GO:0016020">
    <property type="term" value="C:membrane"/>
    <property type="evidence" value="ECO:0000318"/>
    <property type="project" value="GO_Central"/>
</dbReference>
<dbReference type="GO" id="GO:0005886">
    <property type="term" value="C:plasma membrane"/>
    <property type="evidence" value="ECO:0007669"/>
    <property type="project" value="UniProtKB-SubCell"/>
</dbReference>
<dbReference type="GO" id="GO:0008381">
    <property type="term" value="F:mechanosensitive monoatomic ion channel activity"/>
    <property type="evidence" value="ECO:0000318"/>
    <property type="project" value="GO_Central"/>
</dbReference>
<dbReference type="GO" id="GO:0006811">
    <property type="term" value="P:monoatomic ion transport"/>
    <property type="evidence" value="ECO:0000318"/>
    <property type="project" value="GO_Central"/>
</dbReference>
<dbReference type="FunFam" id="1.10.1200.120:FF:000001">
    <property type="entry name" value="Large-conductance mechanosensitive channel"/>
    <property type="match status" value="1"/>
</dbReference>
<dbReference type="Gene3D" id="1.10.1200.120">
    <property type="entry name" value="Large-conductance mechanosensitive channel, MscL, domain 1"/>
    <property type="match status" value="1"/>
</dbReference>
<dbReference type="HAMAP" id="MF_00115">
    <property type="entry name" value="MscL"/>
    <property type="match status" value="1"/>
</dbReference>
<dbReference type="InterPro" id="IPR019823">
    <property type="entry name" value="Mechanosensitive_channel_CS"/>
</dbReference>
<dbReference type="InterPro" id="IPR001185">
    <property type="entry name" value="MS_channel"/>
</dbReference>
<dbReference type="InterPro" id="IPR037673">
    <property type="entry name" value="MSC/AndL"/>
</dbReference>
<dbReference type="InterPro" id="IPR036019">
    <property type="entry name" value="MscL_channel"/>
</dbReference>
<dbReference type="NCBIfam" id="TIGR00220">
    <property type="entry name" value="mscL"/>
    <property type="match status" value="1"/>
</dbReference>
<dbReference type="NCBIfam" id="NF001843">
    <property type="entry name" value="PRK00567.1-4"/>
    <property type="match status" value="1"/>
</dbReference>
<dbReference type="NCBIfam" id="NF010560">
    <property type="entry name" value="PRK13955.1"/>
    <property type="match status" value="1"/>
</dbReference>
<dbReference type="PANTHER" id="PTHR30266:SF2">
    <property type="entry name" value="LARGE-CONDUCTANCE MECHANOSENSITIVE CHANNEL"/>
    <property type="match status" value="1"/>
</dbReference>
<dbReference type="PANTHER" id="PTHR30266">
    <property type="entry name" value="MECHANOSENSITIVE CHANNEL MSCL"/>
    <property type="match status" value="1"/>
</dbReference>
<dbReference type="Pfam" id="PF01741">
    <property type="entry name" value="MscL"/>
    <property type="match status" value="1"/>
</dbReference>
<dbReference type="PRINTS" id="PR01264">
    <property type="entry name" value="MECHCHANNEL"/>
</dbReference>
<dbReference type="SUPFAM" id="SSF81330">
    <property type="entry name" value="Gated mechanosensitive channel"/>
    <property type="match status" value="1"/>
</dbReference>
<dbReference type="PROSITE" id="PS01327">
    <property type="entry name" value="MSCL"/>
    <property type="match status" value="1"/>
</dbReference>
<feature type="chain" id="PRO_0000192433" description="Large-conductance mechanosensitive channel">
    <location>
        <begin position="1"/>
        <end position="130"/>
    </location>
</feature>
<feature type="topological domain" description="Cytoplasmic" evidence="2">
    <location>
        <begin position="1"/>
        <end position="14"/>
    </location>
</feature>
<feature type="transmembrane region" description="Helical" evidence="2">
    <location>
        <begin position="15"/>
        <end position="43"/>
    </location>
</feature>
<feature type="topological domain" description="Extracellular" evidence="2">
    <location>
        <begin position="44"/>
        <end position="65"/>
    </location>
</feature>
<feature type="transmembrane region" description="Helical" evidence="2">
    <location>
        <begin position="66"/>
        <end position="85"/>
    </location>
</feature>
<feature type="topological domain" description="Cytoplasmic" evidence="2">
    <location>
        <begin position="86"/>
        <end position="130"/>
    </location>
</feature>
<organism>
    <name type="scientific">Bacillus subtilis (strain 168)</name>
    <dbReference type="NCBI Taxonomy" id="224308"/>
    <lineage>
        <taxon>Bacteria</taxon>
        <taxon>Bacillati</taxon>
        <taxon>Bacillota</taxon>
        <taxon>Bacilli</taxon>
        <taxon>Bacillales</taxon>
        <taxon>Bacillaceae</taxon>
        <taxon>Bacillus</taxon>
    </lineage>
</organism>
<accession>P94585</accession>
<sequence>MWNEFKAFAMRGNIVDLAIGVVIGGAFGKIVTSLVNDIIMPLVGLLLGGLDFSGLSFTFGDAVVKYGSFIQTIVNFLIISFSIFIVIRTLNGLRRKKEAEEEAAEEAVDAQEELLKEIRDLLKQQAKSPE</sequence>